<name>THIM_CLOB8</name>
<keyword id="KW-0067">ATP-binding</keyword>
<keyword id="KW-0418">Kinase</keyword>
<keyword id="KW-0460">Magnesium</keyword>
<keyword id="KW-0479">Metal-binding</keyword>
<keyword id="KW-0547">Nucleotide-binding</keyword>
<keyword id="KW-0784">Thiamine biosynthesis</keyword>
<keyword id="KW-0808">Transferase</keyword>
<accession>A6M1W7</accession>
<feature type="chain" id="PRO_0000383837" description="Hydroxyethylthiazole kinase">
    <location>
        <begin position="1"/>
        <end position="276"/>
    </location>
</feature>
<feature type="binding site" evidence="1">
    <location>
        <position position="48"/>
    </location>
    <ligand>
        <name>substrate</name>
    </ligand>
</feature>
<feature type="binding site" evidence="1">
    <location>
        <position position="124"/>
    </location>
    <ligand>
        <name>ATP</name>
        <dbReference type="ChEBI" id="CHEBI:30616"/>
    </ligand>
</feature>
<feature type="binding site" evidence="1">
    <location>
        <position position="175"/>
    </location>
    <ligand>
        <name>ATP</name>
        <dbReference type="ChEBI" id="CHEBI:30616"/>
    </ligand>
</feature>
<feature type="binding site" evidence="1">
    <location>
        <position position="202"/>
    </location>
    <ligand>
        <name>substrate</name>
    </ligand>
</feature>
<dbReference type="EC" id="2.7.1.50" evidence="1"/>
<dbReference type="EMBL" id="CP000721">
    <property type="protein sequence ID" value="ABR36597.1"/>
    <property type="molecule type" value="Genomic_DNA"/>
</dbReference>
<dbReference type="RefSeq" id="WP_012060644.1">
    <property type="nucleotide sequence ID" value="NC_009617.1"/>
</dbReference>
<dbReference type="SMR" id="A6M1W7"/>
<dbReference type="GeneID" id="66347358"/>
<dbReference type="KEGG" id="cbe:Cbei_4488"/>
<dbReference type="eggNOG" id="COG2145">
    <property type="taxonomic scope" value="Bacteria"/>
</dbReference>
<dbReference type="HOGENOM" id="CLU_019943_0_0_9"/>
<dbReference type="UniPathway" id="UPA00060">
    <property type="reaction ID" value="UER00139"/>
</dbReference>
<dbReference type="Proteomes" id="UP000000565">
    <property type="component" value="Chromosome"/>
</dbReference>
<dbReference type="GO" id="GO:0005524">
    <property type="term" value="F:ATP binding"/>
    <property type="evidence" value="ECO:0007669"/>
    <property type="project" value="UniProtKB-UniRule"/>
</dbReference>
<dbReference type="GO" id="GO:0004417">
    <property type="term" value="F:hydroxyethylthiazole kinase activity"/>
    <property type="evidence" value="ECO:0007669"/>
    <property type="project" value="UniProtKB-UniRule"/>
</dbReference>
<dbReference type="GO" id="GO:0000287">
    <property type="term" value="F:magnesium ion binding"/>
    <property type="evidence" value="ECO:0007669"/>
    <property type="project" value="UniProtKB-UniRule"/>
</dbReference>
<dbReference type="GO" id="GO:0009228">
    <property type="term" value="P:thiamine biosynthetic process"/>
    <property type="evidence" value="ECO:0007669"/>
    <property type="project" value="UniProtKB-KW"/>
</dbReference>
<dbReference type="GO" id="GO:0009229">
    <property type="term" value="P:thiamine diphosphate biosynthetic process"/>
    <property type="evidence" value="ECO:0007669"/>
    <property type="project" value="UniProtKB-UniRule"/>
</dbReference>
<dbReference type="CDD" id="cd01170">
    <property type="entry name" value="THZ_kinase"/>
    <property type="match status" value="1"/>
</dbReference>
<dbReference type="Gene3D" id="3.40.1190.20">
    <property type="match status" value="1"/>
</dbReference>
<dbReference type="HAMAP" id="MF_00228">
    <property type="entry name" value="Thz_kinase"/>
    <property type="match status" value="1"/>
</dbReference>
<dbReference type="InterPro" id="IPR000417">
    <property type="entry name" value="Hyethyz_kinase"/>
</dbReference>
<dbReference type="InterPro" id="IPR029056">
    <property type="entry name" value="Ribokinase-like"/>
</dbReference>
<dbReference type="NCBIfam" id="NF006830">
    <property type="entry name" value="PRK09355.1"/>
    <property type="match status" value="1"/>
</dbReference>
<dbReference type="NCBIfam" id="TIGR00694">
    <property type="entry name" value="thiM"/>
    <property type="match status" value="1"/>
</dbReference>
<dbReference type="Pfam" id="PF02110">
    <property type="entry name" value="HK"/>
    <property type="match status" value="1"/>
</dbReference>
<dbReference type="PIRSF" id="PIRSF000513">
    <property type="entry name" value="Thz_kinase"/>
    <property type="match status" value="1"/>
</dbReference>
<dbReference type="PRINTS" id="PR01099">
    <property type="entry name" value="HYETHTZKNASE"/>
</dbReference>
<dbReference type="SUPFAM" id="SSF53613">
    <property type="entry name" value="Ribokinase-like"/>
    <property type="match status" value="1"/>
</dbReference>
<protein>
    <recommendedName>
        <fullName evidence="1">Hydroxyethylthiazole kinase</fullName>
        <ecNumber evidence="1">2.7.1.50</ecNumber>
    </recommendedName>
    <alternativeName>
        <fullName evidence="1">4-methyl-5-beta-hydroxyethylthiazole kinase</fullName>
        <shortName evidence="1">TH kinase</shortName>
        <shortName evidence="1">Thz kinase</shortName>
    </alternativeName>
</protein>
<reference key="1">
    <citation type="submission" date="2007-06" db="EMBL/GenBank/DDBJ databases">
        <title>Complete sequence of Clostridium beijerinckii NCIMB 8052.</title>
        <authorList>
            <consortium name="US DOE Joint Genome Institute"/>
            <person name="Copeland A."/>
            <person name="Lucas S."/>
            <person name="Lapidus A."/>
            <person name="Barry K."/>
            <person name="Detter J.C."/>
            <person name="Glavina del Rio T."/>
            <person name="Hammon N."/>
            <person name="Israni S."/>
            <person name="Dalin E."/>
            <person name="Tice H."/>
            <person name="Pitluck S."/>
            <person name="Sims D."/>
            <person name="Brettin T."/>
            <person name="Bruce D."/>
            <person name="Tapia R."/>
            <person name="Brainard J."/>
            <person name="Schmutz J."/>
            <person name="Larimer F."/>
            <person name="Land M."/>
            <person name="Hauser L."/>
            <person name="Kyrpides N."/>
            <person name="Mikhailova N."/>
            <person name="Bennet G."/>
            <person name="Cann I."/>
            <person name="Chen J.-S."/>
            <person name="Contreras A.L."/>
            <person name="Jones D."/>
            <person name="Kashket E."/>
            <person name="Mitchell W."/>
            <person name="Stoddard S."/>
            <person name="Schwarz W."/>
            <person name="Qureshi N."/>
            <person name="Young M."/>
            <person name="Shi Z."/>
            <person name="Ezeji T."/>
            <person name="White B."/>
            <person name="Blaschek H."/>
            <person name="Richardson P."/>
        </authorList>
    </citation>
    <scope>NUCLEOTIDE SEQUENCE [LARGE SCALE GENOMIC DNA]</scope>
    <source>
        <strain>ATCC 51743 / NCIMB 8052</strain>
    </source>
</reference>
<proteinExistence type="inferred from homology"/>
<sequence length="276" mass="28904">MSNEISIKIGSLLNEVRNKKPLVHNITNYVTVNDCANILLAIGASPIMADDIKEAADITKISSALVINIGTLNERTIESMIASGKKANELNIPVVFDPVGAGASEFRNSTTKRLLEEVKISVLRGNMSEIKFISGLGSTTKGVDASENDARTGNDEGIDVAKNLAKKLQCTVAITGATDIISDGERVVILENGTKMLSNVTGTGCMTTALIGAFCGAGSDYFIGAVSGIISMGISGEIALDKAGKIGTGSFHIAIIDAISNLTSNIIEKMNKIKEI</sequence>
<evidence type="ECO:0000255" key="1">
    <source>
        <dbReference type="HAMAP-Rule" id="MF_00228"/>
    </source>
</evidence>
<organism>
    <name type="scientific">Clostridium beijerinckii (strain ATCC 51743 / NCIMB 8052)</name>
    <name type="common">Clostridium acetobutylicum</name>
    <dbReference type="NCBI Taxonomy" id="290402"/>
    <lineage>
        <taxon>Bacteria</taxon>
        <taxon>Bacillati</taxon>
        <taxon>Bacillota</taxon>
        <taxon>Clostridia</taxon>
        <taxon>Eubacteriales</taxon>
        <taxon>Clostridiaceae</taxon>
        <taxon>Clostridium</taxon>
    </lineage>
</organism>
<comment type="function">
    <text evidence="1">Catalyzes the phosphorylation of the hydroxyl group of 4-methyl-5-beta-hydroxyethylthiazole (THZ).</text>
</comment>
<comment type="catalytic activity">
    <reaction evidence="1">
        <text>5-(2-hydroxyethyl)-4-methylthiazole + ATP = 4-methyl-5-(2-phosphooxyethyl)-thiazole + ADP + H(+)</text>
        <dbReference type="Rhea" id="RHEA:24212"/>
        <dbReference type="ChEBI" id="CHEBI:15378"/>
        <dbReference type="ChEBI" id="CHEBI:17957"/>
        <dbReference type="ChEBI" id="CHEBI:30616"/>
        <dbReference type="ChEBI" id="CHEBI:58296"/>
        <dbReference type="ChEBI" id="CHEBI:456216"/>
        <dbReference type="EC" id="2.7.1.50"/>
    </reaction>
</comment>
<comment type="cofactor">
    <cofactor evidence="1">
        <name>Mg(2+)</name>
        <dbReference type="ChEBI" id="CHEBI:18420"/>
    </cofactor>
</comment>
<comment type="pathway">
    <text evidence="1">Cofactor biosynthesis; thiamine diphosphate biosynthesis; 4-methyl-5-(2-phosphoethyl)-thiazole from 5-(2-hydroxyethyl)-4-methylthiazole: step 1/1.</text>
</comment>
<comment type="similarity">
    <text evidence="1">Belongs to the Thz kinase family.</text>
</comment>
<gene>
    <name evidence="1" type="primary">thiM</name>
    <name type="ordered locus">Cbei_4488</name>
</gene>